<organism>
    <name type="scientific">Mus musculus</name>
    <name type="common">Mouse</name>
    <dbReference type="NCBI Taxonomy" id="10090"/>
    <lineage>
        <taxon>Eukaryota</taxon>
        <taxon>Metazoa</taxon>
        <taxon>Chordata</taxon>
        <taxon>Craniata</taxon>
        <taxon>Vertebrata</taxon>
        <taxon>Euteleostomi</taxon>
        <taxon>Mammalia</taxon>
        <taxon>Eutheria</taxon>
        <taxon>Euarchontoglires</taxon>
        <taxon>Glires</taxon>
        <taxon>Rodentia</taxon>
        <taxon>Myomorpha</taxon>
        <taxon>Muroidea</taxon>
        <taxon>Muridae</taxon>
        <taxon>Murinae</taxon>
        <taxon>Mus</taxon>
        <taxon>Mus</taxon>
    </lineage>
</organism>
<accession>Q91UZ5</accession>
<evidence type="ECO:0000250" key="1"/>
<evidence type="ECO:0000250" key="2">
    <source>
        <dbReference type="UniProtKB" id="O14732"/>
    </source>
</evidence>
<evidence type="ECO:0000250" key="3">
    <source>
        <dbReference type="UniProtKB" id="P29218"/>
    </source>
</evidence>
<evidence type="ECO:0000269" key="4">
    <source>
    </source>
</evidence>
<evidence type="ECO:0000305" key="5"/>
<evidence type="ECO:0000312" key="6">
    <source>
        <dbReference type="MGI" id="MGI:2149728"/>
    </source>
</evidence>
<feature type="chain" id="PRO_0000142521" description="Inositol monophosphatase 2">
    <location>
        <begin position="1"/>
        <end position="290"/>
    </location>
</feature>
<feature type="binding site" evidence="3">
    <location>
        <position position="83"/>
    </location>
    <ligand>
        <name>Mg(2+)</name>
        <dbReference type="ChEBI" id="CHEBI:18420"/>
        <label>1</label>
    </ligand>
</feature>
<feature type="binding site" evidence="1">
    <location>
        <position position="83"/>
    </location>
    <ligand>
        <name>substrate</name>
    </ligand>
</feature>
<feature type="binding site" evidence="3">
    <location>
        <position position="103"/>
    </location>
    <ligand>
        <name>Mg(2+)</name>
        <dbReference type="ChEBI" id="CHEBI:18420"/>
        <label>1</label>
    </ligand>
</feature>
<feature type="binding site" evidence="3">
    <location>
        <position position="103"/>
    </location>
    <ligand>
        <name>Mg(2+)</name>
        <dbReference type="ChEBI" id="CHEBI:18420"/>
        <label>2</label>
    </ligand>
</feature>
<feature type="binding site" evidence="1">
    <location>
        <begin position="105"/>
        <end position="108"/>
    </location>
    <ligand>
        <name>substrate</name>
    </ligand>
</feature>
<feature type="binding site" evidence="3">
    <location>
        <position position="105"/>
    </location>
    <ligand>
        <name>Mg(2+)</name>
        <dbReference type="ChEBI" id="CHEBI:18420"/>
        <label>1</label>
    </ligand>
</feature>
<feature type="binding site" evidence="3">
    <location>
        <position position="106"/>
    </location>
    <ligand>
        <name>Mg(2+)</name>
        <dbReference type="ChEBI" id="CHEBI:18420"/>
        <label>2</label>
    </ligand>
</feature>
<feature type="binding site" evidence="1">
    <location>
        <begin position="207"/>
        <end position="209"/>
    </location>
    <ligand>
        <name>substrate</name>
    </ligand>
</feature>
<feature type="binding site" evidence="1">
    <location>
        <position position="226"/>
    </location>
    <ligand>
        <name>substrate</name>
    </ligand>
</feature>
<feature type="binding site" evidence="3">
    <location>
        <position position="233"/>
    </location>
    <ligand>
        <name>Mg(2+)</name>
        <dbReference type="ChEBI" id="CHEBI:18420"/>
        <label>2</label>
    </ligand>
</feature>
<feature type="binding site" evidence="1">
    <location>
        <position position="233"/>
    </location>
    <ligand>
        <name>substrate</name>
    </ligand>
</feature>
<dbReference type="EC" id="3.1.3.25" evidence="2"/>
<dbReference type="EMBL" id="AF353730">
    <property type="protein sequence ID" value="AAK39516.1"/>
    <property type="molecule type" value="mRNA"/>
</dbReference>
<dbReference type="EMBL" id="BC011093">
    <property type="protein sequence ID" value="AAH11093.1"/>
    <property type="molecule type" value="mRNA"/>
</dbReference>
<dbReference type="CCDS" id="CCDS29320.1"/>
<dbReference type="RefSeq" id="NP_444491.1">
    <property type="nucleotide sequence ID" value="NM_053261.3"/>
</dbReference>
<dbReference type="SMR" id="Q91UZ5"/>
<dbReference type="BioGRID" id="227793">
    <property type="interactions" value="1"/>
</dbReference>
<dbReference type="FunCoup" id="Q91UZ5">
    <property type="interactions" value="668"/>
</dbReference>
<dbReference type="STRING" id="10090.ENSMUSP00000025403"/>
<dbReference type="PhosphoSitePlus" id="Q91UZ5"/>
<dbReference type="jPOST" id="Q91UZ5"/>
<dbReference type="PaxDb" id="10090-ENSMUSP00000025403"/>
<dbReference type="ProteomicsDB" id="269312"/>
<dbReference type="Pumba" id="Q91UZ5"/>
<dbReference type="Antibodypedia" id="21936">
    <property type="antibodies" value="85 antibodies from 22 providers"/>
</dbReference>
<dbReference type="DNASU" id="114663"/>
<dbReference type="Ensembl" id="ENSMUST00000025403.8">
    <property type="protein sequence ID" value="ENSMUSP00000025403.7"/>
    <property type="gene ID" value="ENSMUSG00000024525.8"/>
</dbReference>
<dbReference type="GeneID" id="114663"/>
<dbReference type="KEGG" id="mmu:114663"/>
<dbReference type="UCSC" id="uc008fly.1">
    <property type="organism name" value="mouse"/>
</dbReference>
<dbReference type="AGR" id="MGI:2149728"/>
<dbReference type="CTD" id="3613"/>
<dbReference type="MGI" id="MGI:2149728">
    <property type="gene designation" value="Impa2"/>
</dbReference>
<dbReference type="VEuPathDB" id="HostDB:ENSMUSG00000024525"/>
<dbReference type="eggNOG" id="KOG2951">
    <property type="taxonomic scope" value="Eukaryota"/>
</dbReference>
<dbReference type="GeneTree" id="ENSGT00940000160536"/>
<dbReference type="HOGENOM" id="CLU_044118_1_0_1"/>
<dbReference type="InParanoid" id="Q91UZ5"/>
<dbReference type="OMA" id="QTIHYGR"/>
<dbReference type="OrthoDB" id="10254945at2759"/>
<dbReference type="PhylomeDB" id="Q91UZ5"/>
<dbReference type="TreeFam" id="TF313194"/>
<dbReference type="BRENDA" id="3.1.3.25">
    <property type="organism ID" value="3474"/>
</dbReference>
<dbReference type="Reactome" id="R-MMU-1855183">
    <property type="pathway name" value="Synthesis of IP2, IP, and Ins in the cytosol"/>
</dbReference>
<dbReference type="UniPathway" id="UPA00823">
    <property type="reaction ID" value="UER00788"/>
</dbReference>
<dbReference type="BioGRID-ORCS" id="114663">
    <property type="hits" value="5 hits in 79 CRISPR screens"/>
</dbReference>
<dbReference type="ChiTaRS" id="Impa2">
    <property type="organism name" value="mouse"/>
</dbReference>
<dbReference type="PRO" id="PR:Q91UZ5"/>
<dbReference type="Proteomes" id="UP000000589">
    <property type="component" value="Chromosome 18"/>
</dbReference>
<dbReference type="RNAct" id="Q91UZ5">
    <property type="molecule type" value="protein"/>
</dbReference>
<dbReference type="Bgee" id="ENSMUSG00000024525">
    <property type="expression patterns" value="Expressed in granulocyte and 209 other cell types or tissues"/>
</dbReference>
<dbReference type="ExpressionAtlas" id="Q91UZ5">
    <property type="expression patterns" value="baseline and differential"/>
</dbReference>
<dbReference type="GO" id="GO:0005737">
    <property type="term" value="C:cytoplasm"/>
    <property type="evidence" value="ECO:0000266"/>
    <property type="project" value="MGI"/>
</dbReference>
<dbReference type="GO" id="GO:0008877">
    <property type="term" value="F:glucose-1-phosphatase activity"/>
    <property type="evidence" value="ECO:0007669"/>
    <property type="project" value="RHEA"/>
</dbReference>
<dbReference type="GO" id="GO:0047954">
    <property type="term" value="F:glycerol-2-phosphatase activity"/>
    <property type="evidence" value="ECO:0007669"/>
    <property type="project" value="RHEA"/>
</dbReference>
<dbReference type="GO" id="GO:0008934">
    <property type="term" value="F:inositol monophosphate 1-phosphatase activity"/>
    <property type="evidence" value="ECO:0000266"/>
    <property type="project" value="MGI"/>
</dbReference>
<dbReference type="GO" id="GO:0052832">
    <property type="term" value="F:inositol monophosphate 3-phosphatase activity"/>
    <property type="evidence" value="ECO:0007669"/>
    <property type="project" value="RHEA"/>
</dbReference>
<dbReference type="GO" id="GO:0052833">
    <property type="term" value="F:inositol monophosphate 4-phosphatase activity"/>
    <property type="evidence" value="ECO:0007669"/>
    <property type="project" value="RHEA"/>
</dbReference>
<dbReference type="GO" id="GO:0046872">
    <property type="term" value="F:metal ion binding"/>
    <property type="evidence" value="ECO:0007669"/>
    <property type="project" value="UniProtKB-KW"/>
</dbReference>
<dbReference type="GO" id="GO:0042803">
    <property type="term" value="F:protein homodimerization activity"/>
    <property type="evidence" value="ECO:0000266"/>
    <property type="project" value="MGI"/>
</dbReference>
<dbReference type="GO" id="GO:0006021">
    <property type="term" value="P:inositol biosynthetic process"/>
    <property type="evidence" value="ECO:0007669"/>
    <property type="project" value="UniProtKB-UniPathway"/>
</dbReference>
<dbReference type="GO" id="GO:0006020">
    <property type="term" value="P:inositol metabolic process"/>
    <property type="evidence" value="ECO:0000304"/>
    <property type="project" value="MGI"/>
</dbReference>
<dbReference type="GO" id="GO:0046854">
    <property type="term" value="P:phosphatidylinositol phosphate biosynthetic process"/>
    <property type="evidence" value="ECO:0007669"/>
    <property type="project" value="InterPro"/>
</dbReference>
<dbReference type="GO" id="GO:0010226">
    <property type="term" value="P:response to lithium ion"/>
    <property type="evidence" value="ECO:0007669"/>
    <property type="project" value="Ensembl"/>
</dbReference>
<dbReference type="CDD" id="cd01639">
    <property type="entry name" value="IMPase"/>
    <property type="match status" value="1"/>
</dbReference>
<dbReference type="FunFam" id="3.30.540.10:FF:000004">
    <property type="entry name" value="Inositol-1-monophosphatase"/>
    <property type="match status" value="1"/>
</dbReference>
<dbReference type="FunFam" id="3.40.190.80:FF:000002">
    <property type="entry name" value="Inositol-1-monophosphatase"/>
    <property type="match status" value="1"/>
</dbReference>
<dbReference type="Gene3D" id="3.40.190.80">
    <property type="match status" value="1"/>
</dbReference>
<dbReference type="Gene3D" id="3.30.540.10">
    <property type="entry name" value="Fructose-1,6-Bisphosphatase, subunit A, domain 1"/>
    <property type="match status" value="1"/>
</dbReference>
<dbReference type="InterPro" id="IPR033942">
    <property type="entry name" value="IMPase"/>
</dbReference>
<dbReference type="InterPro" id="IPR020583">
    <property type="entry name" value="Inositol_monoP_metal-BS"/>
</dbReference>
<dbReference type="InterPro" id="IPR020552">
    <property type="entry name" value="Inositol_monoPase_Li-sen"/>
</dbReference>
<dbReference type="InterPro" id="IPR000760">
    <property type="entry name" value="Inositol_monophosphatase-like"/>
</dbReference>
<dbReference type="InterPro" id="IPR020550">
    <property type="entry name" value="Inositol_monophosphatase_CS"/>
</dbReference>
<dbReference type="PANTHER" id="PTHR20854">
    <property type="entry name" value="INOSITOL MONOPHOSPHATASE"/>
    <property type="match status" value="1"/>
</dbReference>
<dbReference type="PANTHER" id="PTHR20854:SF29">
    <property type="entry name" value="INOSITOL MONOPHOSPHATASE 2"/>
    <property type="match status" value="1"/>
</dbReference>
<dbReference type="Pfam" id="PF00459">
    <property type="entry name" value="Inositol_P"/>
    <property type="match status" value="1"/>
</dbReference>
<dbReference type="PRINTS" id="PR00377">
    <property type="entry name" value="IMPHPHTASES"/>
</dbReference>
<dbReference type="PRINTS" id="PR00378">
    <property type="entry name" value="LIIMPHPHTASE"/>
</dbReference>
<dbReference type="SUPFAM" id="SSF56655">
    <property type="entry name" value="Carbohydrate phosphatase"/>
    <property type="match status" value="1"/>
</dbReference>
<dbReference type="PROSITE" id="PS00629">
    <property type="entry name" value="IMP_1"/>
    <property type="match status" value="1"/>
</dbReference>
<dbReference type="PROSITE" id="PS00630">
    <property type="entry name" value="IMP_2"/>
    <property type="match status" value="1"/>
</dbReference>
<protein>
    <recommendedName>
        <fullName>Inositol monophosphatase 2</fullName>
        <shortName>IMP 2</shortName>
        <shortName>IMPase 2</shortName>
        <ecNumber evidence="2">3.1.3.25</ecNumber>
    </recommendedName>
    <alternativeName>
        <fullName>Inositol-1(or 4)-monophosphatase 2</fullName>
    </alternativeName>
    <alternativeName>
        <fullName>Myo-inositol monophosphatase A2</fullName>
    </alternativeName>
</protein>
<gene>
    <name evidence="6" type="primary">Impa2</name>
</gene>
<keyword id="KW-0963">Cytoplasm</keyword>
<keyword id="KW-0378">Hydrolase</keyword>
<keyword id="KW-0452">Lithium</keyword>
<keyword id="KW-0460">Magnesium</keyword>
<keyword id="KW-0479">Metal-binding</keyword>
<keyword id="KW-1185">Reference proteome</keyword>
<name>IMPA2_MOUSE</name>
<reference key="1">
    <citation type="journal article" date="2001" name="Gene">
        <title>Characterization of two genes, Impa1 and Impa2 encoding mouse myo-inositol monophosphatases.</title>
        <authorList>
            <person name="Shamir A."/>
            <person name="Sjoeholt G."/>
            <person name="Ebstein R.P."/>
            <person name="Agam G."/>
            <person name="Steen V.M."/>
        </authorList>
    </citation>
    <scope>NUCLEOTIDE SEQUENCE [MRNA]</scope>
    <source>
        <strain>129/J</strain>
    </source>
</reference>
<reference key="2">
    <citation type="journal article" date="2004" name="Genome Res.">
        <title>The status, quality, and expansion of the NIH full-length cDNA project: the Mammalian Gene Collection (MGC).</title>
        <authorList>
            <consortium name="The MGC Project Team"/>
        </authorList>
    </citation>
    <scope>NUCLEOTIDE SEQUENCE [LARGE SCALE MRNA]</scope>
    <source>
        <strain>Czech II</strain>
        <tissue>Mammary tumor</tissue>
    </source>
</reference>
<reference key="3">
    <citation type="journal article" date="2007" name="J. Biol. Chem.">
        <title>Spatial expression patterns and biochemical properties distinguish a second myo-inositol monophosphatase IMPA2 from IMPA1.</title>
        <authorList>
            <person name="Ohnishi T."/>
            <person name="Ohba H."/>
            <person name="Seo K.-C."/>
            <person name="Im J."/>
            <person name="Sato Y."/>
            <person name="Iwayama Y."/>
            <person name="Furuichi T."/>
            <person name="Chung S.-K."/>
            <person name="Yoshikawa T."/>
        </authorList>
    </citation>
    <scope>TISSUE SPECIFICITY</scope>
</reference>
<reference key="4">
    <citation type="journal article" date="2010" name="Cell">
        <title>A tissue-specific atlas of mouse protein phosphorylation and expression.</title>
        <authorList>
            <person name="Huttlin E.L."/>
            <person name="Jedrychowski M.P."/>
            <person name="Elias J.E."/>
            <person name="Goswami T."/>
            <person name="Rad R."/>
            <person name="Beausoleil S.A."/>
            <person name="Villen J."/>
            <person name="Haas W."/>
            <person name="Sowa M.E."/>
            <person name="Gygi S.P."/>
        </authorList>
    </citation>
    <scope>IDENTIFICATION BY MASS SPECTROMETRY [LARGE SCALE ANALYSIS]</scope>
    <source>
        <tissue>Brain</tissue>
        <tissue>Brown adipose tissue</tissue>
        <tissue>Heart</tissue>
        <tissue>Kidney</tissue>
        <tissue>Spleen</tissue>
    </source>
</reference>
<sequence length="290" mass="31716">MKPSSEEEGELVQGVGPWDECFEVAVQLALRAGQIIRKALTEEKRVSTKTSAADLVTETDHRVEDLIVSELRKRFPSHRFIAEEATASGAKCVLTHSPTWIIDPIDGTCNFVHRFPTVAVSIGFAVHQELEFGVIHHCTEERLYTGRRGQGAFCNGQRLQVSRETDLAKALVLTEIGPKRDPDTLKVFLSNMERLLHAKAHGVRVIGSSTLALCYLASGAADAYYQFGLHCWDLAAATVIIREAGGIVIDTSGGPLDLMSCRVVAAGTREMAVLIAQALQTINYGRDDEK</sequence>
<proteinExistence type="evidence at protein level"/>
<comment type="function">
    <text evidence="2">Phosphatase that can use myo-inositol monophosphates, myo-inositol 1,4-diphosphate, scyllo-inositol-1,4-diphosphate, glucose-1-phosphate, beta-glycerophosphate and 2'-AMP as substrates in vitro. No physiological substrates has been described yet. Has been implicated as the pharmacological target for lithium Li(+) action in brain.</text>
</comment>
<comment type="catalytic activity">
    <reaction evidence="2">
        <text>a myo-inositol phosphate + H2O = myo-inositol + phosphate</text>
        <dbReference type="Rhea" id="RHEA:24056"/>
        <dbReference type="ChEBI" id="CHEBI:15377"/>
        <dbReference type="ChEBI" id="CHEBI:17268"/>
        <dbReference type="ChEBI" id="CHEBI:43474"/>
        <dbReference type="ChEBI" id="CHEBI:84139"/>
        <dbReference type="EC" id="3.1.3.25"/>
    </reaction>
    <physiologicalReaction direction="left-to-right" evidence="2">
        <dbReference type="Rhea" id="RHEA:24057"/>
    </physiologicalReaction>
</comment>
<comment type="catalytic activity">
    <reaction evidence="2">
        <text>1D-myo-inositol 1-phosphate + H2O = myo-inositol + phosphate</text>
        <dbReference type="Rhea" id="RHEA:27670"/>
        <dbReference type="ChEBI" id="CHEBI:15377"/>
        <dbReference type="ChEBI" id="CHEBI:17268"/>
        <dbReference type="ChEBI" id="CHEBI:43474"/>
        <dbReference type="ChEBI" id="CHEBI:58433"/>
        <dbReference type="EC" id="3.1.3.25"/>
    </reaction>
    <physiologicalReaction direction="left-to-right" evidence="2">
        <dbReference type="Rhea" id="RHEA:27671"/>
    </physiologicalReaction>
</comment>
<comment type="catalytic activity">
    <reaction evidence="2">
        <text>1D-myo-inositol 2-phosphate + H2O = myo-inositol + phosphate</text>
        <dbReference type="Rhea" id="RHEA:44152"/>
        <dbReference type="ChEBI" id="CHEBI:15377"/>
        <dbReference type="ChEBI" id="CHEBI:17268"/>
        <dbReference type="ChEBI" id="CHEBI:43474"/>
        <dbReference type="ChEBI" id="CHEBI:84142"/>
        <dbReference type="EC" id="3.1.3.25"/>
    </reaction>
    <physiologicalReaction direction="left-to-right" evidence="2">
        <dbReference type="Rhea" id="RHEA:44153"/>
    </physiologicalReaction>
</comment>
<comment type="catalytic activity">
    <reaction evidence="2">
        <text>1D-myo-inositol 3-phosphate + H2O = myo-inositol + phosphate</text>
        <dbReference type="Rhea" id="RHEA:30739"/>
        <dbReference type="ChEBI" id="CHEBI:15377"/>
        <dbReference type="ChEBI" id="CHEBI:17268"/>
        <dbReference type="ChEBI" id="CHEBI:43474"/>
        <dbReference type="ChEBI" id="CHEBI:58401"/>
        <dbReference type="EC" id="3.1.3.25"/>
    </reaction>
    <physiologicalReaction direction="left-to-right" evidence="2">
        <dbReference type="Rhea" id="RHEA:30740"/>
    </physiologicalReaction>
</comment>
<comment type="catalytic activity">
    <reaction evidence="2">
        <text>1D-myo-inositol 4-phosphate + H2O = myo-inositol + phosphate</text>
        <dbReference type="Rhea" id="RHEA:30735"/>
        <dbReference type="ChEBI" id="CHEBI:15377"/>
        <dbReference type="ChEBI" id="CHEBI:17268"/>
        <dbReference type="ChEBI" id="CHEBI:43474"/>
        <dbReference type="ChEBI" id="CHEBI:58469"/>
        <dbReference type="EC" id="3.1.3.25"/>
    </reaction>
    <physiologicalReaction direction="left-to-right" evidence="2">
        <dbReference type="Rhea" id="RHEA:30736"/>
    </physiologicalReaction>
</comment>
<comment type="catalytic activity">
    <reaction evidence="2">
        <text>1D-myo-inositol 5-phosphate + H2O = myo-inositol + phosphate</text>
        <dbReference type="Rhea" id="RHEA:44156"/>
        <dbReference type="ChEBI" id="CHEBI:15377"/>
        <dbReference type="ChEBI" id="CHEBI:17268"/>
        <dbReference type="ChEBI" id="CHEBI:43474"/>
        <dbReference type="ChEBI" id="CHEBI:84141"/>
        <dbReference type="EC" id="3.1.3.25"/>
    </reaction>
    <physiologicalReaction direction="left-to-right" evidence="2">
        <dbReference type="Rhea" id="RHEA:44157"/>
    </physiologicalReaction>
</comment>
<comment type="catalytic activity">
    <reaction evidence="2">
        <text>1D-myo-inositol 6-phosphate + H2O = myo-inositol + phosphate</text>
        <dbReference type="Rhea" id="RHEA:44160"/>
        <dbReference type="ChEBI" id="CHEBI:15377"/>
        <dbReference type="ChEBI" id="CHEBI:17268"/>
        <dbReference type="ChEBI" id="CHEBI:43474"/>
        <dbReference type="ChEBI" id="CHEBI:64841"/>
        <dbReference type="EC" id="3.1.3.25"/>
    </reaction>
    <physiologicalReaction direction="left-to-right" evidence="2">
        <dbReference type="Rhea" id="RHEA:44161"/>
    </physiologicalReaction>
</comment>
<comment type="catalytic activity">
    <reaction evidence="2">
        <text>alpha-D-glucose 1-phosphate + H2O = D-glucose + phosphate</text>
        <dbReference type="Rhea" id="RHEA:19933"/>
        <dbReference type="ChEBI" id="CHEBI:4167"/>
        <dbReference type="ChEBI" id="CHEBI:15377"/>
        <dbReference type="ChEBI" id="CHEBI:43474"/>
        <dbReference type="ChEBI" id="CHEBI:58601"/>
    </reaction>
    <physiologicalReaction direction="left-to-right" evidence="2">
        <dbReference type="Rhea" id="RHEA:19934"/>
    </physiologicalReaction>
</comment>
<comment type="catalytic activity">
    <reaction evidence="2">
        <text>glycerol 2-phosphate + H2O = glycerol + phosphate</text>
        <dbReference type="Rhea" id="RHEA:13105"/>
        <dbReference type="ChEBI" id="CHEBI:15377"/>
        <dbReference type="ChEBI" id="CHEBI:17754"/>
        <dbReference type="ChEBI" id="CHEBI:43474"/>
        <dbReference type="ChEBI" id="CHEBI:58083"/>
    </reaction>
    <physiologicalReaction direction="left-to-right" evidence="2">
        <dbReference type="Rhea" id="RHEA:13106"/>
    </physiologicalReaction>
</comment>
<comment type="catalytic activity">
    <reaction evidence="2">
        <text>adenosine 2'-phosphate + H2O = adenosine + phosphate</text>
        <dbReference type="Rhea" id="RHEA:37343"/>
        <dbReference type="ChEBI" id="CHEBI:15377"/>
        <dbReference type="ChEBI" id="CHEBI:16335"/>
        <dbReference type="ChEBI" id="CHEBI:43474"/>
        <dbReference type="ChEBI" id="CHEBI:77740"/>
    </reaction>
    <physiologicalReaction direction="left-to-right" evidence="2">
        <dbReference type="Rhea" id="RHEA:37344"/>
    </physiologicalReaction>
</comment>
<comment type="cofactor">
    <cofactor evidence="2">
        <name>Mg(2+)</name>
        <dbReference type="ChEBI" id="CHEBI:18420"/>
    </cofactor>
</comment>
<comment type="pathway">
    <text>Polyol metabolism; myo-inositol biosynthesis; myo-inositol from D-glucose 6-phosphate: step 2/2.</text>
</comment>
<comment type="subunit">
    <text evidence="2">Homodimer.</text>
</comment>
<comment type="subcellular location">
    <subcellularLocation>
        <location evidence="2">Cytoplasm</location>
    </subcellularLocation>
</comment>
<comment type="tissue specificity">
    <text evidence="4">Mostly expressed in brain, small intestine, heart, kidney, and spleen (at protein level).</text>
</comment>
<comment type="similarity">
    <text evidence="5">Belongs to the inositol monophosphatase superfamily.</text>
</comment>